<organism>
    <name type="scientific">Saccharomyces cerevisiae (strain ATCC 204508 / S288c)</name>
    <name type="common">Baker's yeast</name>
    <dbReference type="NCBI Taxonomy" id="559292"/>
    <lineage>
        <taxon>Eukaryota</taxon>
        <taxon>Fungi</taxon>
        <taxon>Dikarya</taxon>
        <taxon>Ascomycota</taxon>
        <taxon>Saccharomycotina</taxon>
        <taxon>Saccharomycetes</taxon>
        <taxon>Saccharomycetales</taxon>
        <taxon>Saccharomycetaceae</taxon>
        <taxon>Saccharomyces</taxon>
    </lineage>
</organism>
<dbReference type="EMBL" id="Z46255">
    <property type="protein sequence ID" value="CAA86346.1"/>
    <property type="molecule type" value="Genomic_DNA"/>
</dbReference>
<dbReference type="EMBL" id="D50617">
    <property type="status" value="NOT_ANNOTATED_CDS"/>
    <property type="molecule type" value="Genomic_DNA"/>
</dbReference>
<dbReference type="PIR" id="S48315">
    <property type="entry name" value="S48315"/>
</dbReference>
<dbReference type="PaxDb" id="4932-YFL012W-A"/>
<dbReference type="EnsemblFungi" id="YFL012W-A_mRNA">
    <property type="protein sequence ID" value="YFL012W-A"/>
    <property type="gene ID" value="YFL012W-A"/>
</dbReference>
<dbReference type="AGR" id="SGD:S000002964"/>
<dbReference type="SGD" id="S000002964">
    <property type="gene designation" value="YFL012W-A"/>
</dbReference>
<dbReference type="HOGENOM" id="CLU_2005213_0_0_1"/>
<dbReference type="GO" id="GO:0016020">
    <property type="term" value="C:membrane"/>
    <property type="evidence" value="ECO:0007669"/>
    <property type="project" value="UniProtKB-SubCell"/>
</dbReference>
<reference key="1">
    <citation type="submission" date="1994-09" db="EMBL/GenBank/DDBJ databases">
        <authorList>
            <person name="Barrell B."/>
            <person name="Rajandream M.A."/>
        </authorList>
    </citation>
    <scope>NUCLEOTIDE SEQUENCE [GENOMIC DNA]</scope>
    <source>
        <strain>ATCC 204511 / S288c / AB972</strain>
    </source>
</reference>
<reference key="2">
    <citation type="journal article" date="1995" name="Nat. Genet.">
        <title>Analysis of the nucleotide sequence of chromosome VI from Saccharomyces cerevisiae.</title>
        <authorList>
            <person name="Murakami Y."/>
            <person name="Naitou M."/>
            <person name="Hagiwara H."/>
            <person name="Shibata T."/>
            <person name="Ozawa M."/>
            <person name="Sasanuma S."/>
            <person name="Sasanuma M."/>
            <person name="Tsuchiya Y."/>
            <person name="Soeda E."/>
            <person name="Yokoyama K."/>
            <person name="Yamazaki M."/>
            <person name="Tashiro H."/>
            <person name="Eki T."/>
        </authorList>
    </citation>
    <scope>NUCLEOTIDE SEQUENCE [LARGE SCALE GENOMIC DNA]</scope>
    <source>
        <strain>ATCC 204508 / S288c</strain>
    </source>
</reference>
<reference key="3">
    <citation type="journal article" date="2014" name="G3 (Bethesda)">
        <title>The reference genome sequence of Saccharomyces cerevisiae: Then and now.</title>
        <authorList>
            <person name="Engel S.R."/>
            <person name="Dietrich F.S."/>
            <person name="Fisk D.G."/>
            <person name="Binkley G."/>
            <person name="Balakrishnan R."/>
            <person name="Costanzo M.C."/>
            <person name="Dwight S.S."/>
            <person name="Hitz B.C."/>
            <person name="Karra K."/>
            <person name="Nash R.S."/>
            <person name="Weng S."/>
            <person name="Wong E.D."/>
            <person name="Lloyd P."/>
            <person name="Skrzypek M.S."/>
            <person name="Miyasato S.R."/>
            <person name="Simison M."/>
            <person name="Cherry J.M."/>
        </authorList>
    </citation>
    <scope>GENOME REANNOTATION</scope>
    <source>
        <strain>ATCC 204508 / S288c</strain>
    </source>
</reference>
<evidence type="ECO:0000255" key="1"/>
<evidence type="ECO:0000305" key="2"/>
<evidence type="ECO:0000305" key="3">
    <source>
    </source>
</evidence>
<feature type="chain" id="PRO_0000299918" description="Putative uncharacterized protein YFL012W-A">
    <location>
        <begin position="1"/>
        <end position="124"/>
    </location>
</feature>
<feature type="transmembrane region" description="Helical" evidence="1">
    <location>
        <begin position="83"/>
        <end position="100"/>
    </location>
</feature>
<comment type="subcellular location">
    <subcellularLocation>
        <location evidence="2">Membrane</location>
        <topology evidence="2">Single-pass membrane protein</topology>
    </subcellularLocation>
</comment>
<comment type="miscellaneous">
    <text evidence="2">Partially overlaps IES1.</text>
</comment>
<comment type="caution">
    <text evidence="3">Product of a dubious gene prediction unlikely to encode a functional protein. Because of that it is not part of the S.cerevisiae S288c complete/reference proteome set.</text>
</comment>
<gene>
    <name type="ordered locus">YFL012W-A</name>
</gene>
<name>YFL12_YEAST</name>
<keyword id="KW-0472">Membrane</keyword>
<keyword id="KW-0812">Transmembrane</keyword>
<keyword id="KW-1133">Transmembrane helix</keyword>
<protein>
    <recommendedName>
        <fullName>Putative uncharacterized protein YFL012W-A</fullName>
    </recommendedName>
</protein>
<proteinExistence type="uncertain"/>
<sequence>MLLLVIPILQIALENLLLFRQNCLLVVGKYHELDRILSSPSLIRVSPLFSFRFYLVNHELFPIPYQHSLGVLYLLVPLPHSRVTCFSLYTICYRIVLIWAKKKKSLIISDTAKYILAWLRKVLL</sequence>
<accession>Q03186</accession>